<reference key="1">
    <citation type="journal article" date="1996" name="Mol. Reprod. Dev.">
        <title>Isolation, characterization, and expression of cDNAs encoding the medaka (Oryzias latipes) ovarian follicle cytochrome P-450 aromatase.</title>
        <authorList>
            <person name="Fukada S."/>
            <person name="Tanaka M."/>
            <person name="Matsuyama M."/>
            <person name="Kobayashi D."/>
            <person name="Nagahama Y."/>
        </authorList>
    </citation>
    <scope>NUCLEOTIDE SEQUENCE [MRNA] (ISOFORMS C17L AND C17S)</scope>
    <source>
        <strain>Orange-red</strain>
        <tissue>Ovarian follicle</tissue>
    </source>
</reference>
<keyword id="KW-0025">Alternative splicing</keyword>
<keyword id="KW-0349">Heme</keyword>
<keyword id="KW-0408">Iron</keyword>
<keyword id="KW-0443">Lipid metabolism</keyword>
<keyword id="KW-0456">Lyase</keyword>
<keyword id="KW-0472">Membrane</keyword>
<keyword id="KW-0479">Metal-binding</keyword>
<keyword id="KW-0503">Monooxygenase</keyword>
<keyword id="KW-0560">Oxidoreductase</keyword>
<keyword id="KW-1185">Reference proteome</keyword>
<keyword id="KW-0755">Steroidogenesis</keyword>
<sequence>MAWFLCLSVLVVLVLALAALLWRVRTRDRPQEAPSLPYLPVLGSLLSLRSPHPPHVLFKELQQKYGQTYSLKMGSHQVIIVNHHAHAREVLLKRGRTFAGRPRTVTTDVLTRDGKDIAFGDYSATWRFHRKIVHGALCMFGEGSASLQRIICTEAQSLCSTLSEAAATGLALDLSPELTRAVTNVICSLCFNSSYSRGDPEFEAMLRYSQGIVDTVAKDSLVDIFPWLQIFPNKDLRLLKQCVAVRDQLLQKKFEEHKSDYSDHVQRDLLDALLRAKRSAENNNTAAEFSAEAVGLSDDHLLMTVGDIFGAGVETTTTVLKWAITYLIHYPEVQKQIQEELDRKVGVDRPPQLSDRGSLPFLEATIREVLRIRPVAPLLIPHVALSDTSLGDFTVRKGTRVVINLWSLHHDEKEWTNPDLFNPGRFLSADGSSLTLPSSSYLPFGAGLRVCLGEALAKMELFLFLSWILQRFTLSVPPSQSLPSLEGKFGVVLQPVKYAVKATPRPGCHSGLFPANP</sequence>
<dbReference type="EC" id="1.14.14.19" evidence="2"/>
<dbReference type="EC" id="1.14.14.32" evidence="2"/>
<dbReference type="EMBL" id="D87121">
    <property type="protein sequence ID" value="BAA13252.1"/>
    <property type="molecule type" value="mRNA"/>
</dbReference>
<dbReference type="EMBL" id="D87122">
    <property type="protein sequence ID" value="BAA13253.1"/>
    <property type="molecule type" value="mRNA"/>
</dbReference>
<dbReference type="RefSeq" id="NP_001098564.1">
    <molecule id="P70085-1"/>
    <property type="nucleotide sequence ID" value="NM_001105094.1"/>
</dbReference>
<dbReference type="SMR" id="P70085"/>
<dbReference type="STRING" id="8090.ENSORLP00000023956"/>
<dbReference type="Ensembl" id="ENSORLT00000023960.2">
    <molecule id="P70085-1"/>
    <property type="protein sequence ID" value="ENSORLP00000023959.2"/>
    <property type="gene ID" value="ENSORLG00000019226.2"/>
</dbReference>
<dbReference type="Ensembl" id="ENSORLT00000023962.2">
    <molecule id="P70085-2"/>
    <property type="protein sequence ID" value="ENSORLP00000023961.1"/>
    <property type="gene ID" value="ENSORLG00000019226.2"/>
</dbReference>
<dbReference type="GeneID" id="100125816"/>
<dbReference type="KEGG" id="ola:100125816"/>
<dbReference type="CTD" id="105601846"/>
<dbReference type="eggNOG" id="KOG0156">
    <property type="taxonomic scope" value="Eukaryota"/>
</dbReference>
<dbReference type="GeneTree" id="ENSGT00940000155588"/>
<dbReference type="HOGENOM" id="CLU_001570_22_0_1"/>
<dbReference type="InParanoid" id="P70085"/>
<dbReference type="OrthoDB" id="1470350at2759"/>
<dbReference type="UniPathway" id="UPA00062"/>
<dbReference type="Proteomes" id="UP000001038">
    <property type="component" value="Chromosome 15"/>
</dbReference>
<dbReference type="Proteomes" id="UP000265180">
    <property type="component" value="Unplaced"/>
</dbReference>
<dbReference type="Proteomes" id="UP000265200">
    <property type="component" value="Unplaced"/>
</dbReference>
<dbReference type="Bgee" id="ENSORLG00000019226">
    <property type="expression patterns" value="Expressed in testis and 5 other cell types or tissues"/>
</dbReference>
<dbReference type="GO" id="GO:0016020">
    <property type="term" value="C:membrane"/>
    <property type="evidence" value="ECO:0007669"/>
    <property type="project" value="UniProtKB-SubCell"/>
</dbReference>
<dbReference type="GO" id="GO:0020037">
    <property type="term" value="F:heme binding"/>
    <property type="evidence" value="ECO:0007669"/>
    <property type="project" value="InterPro"/>
</dbReference>
<dbReference type="GO" id="GO:0005506">
    <property type="term" value="F:iron ion binding"/>
    <property type="evidence" value="ECO:0007669"/>
    <property type="project" value="InterPro"/>
</dbReference>
<dbReference type="GO" id="GO:0016829">
    <property type="term" value="F:lyase activity"/>
    <property type="evidence" value="ECO:0007669"/>
    <property type="project" value="UniProtKB-KW"/>
</dbReference>
<dbReference type="GO" id="GO:0004508">
    <property type="term" value="F:steroid 17-alpha-monooxygenase activity"/>
    <property type="evidence" value="ECO:0000318"/>
    <property type="project" value="GO_Central"/>
</dbReference>
<dbReference type="GO" id="GO:0042446">
    <property type="term" value="P:hormone biosynthetic process"/>
    <property type="evidence" value="ECO:0000318"/>
    <property type="project" value="GO_Central"/>
</dbReference>
<dbReference type="GO" id="GO:0042448">
    <property type="term" value="P:progesterone metabolic process"/>
    <property type="evidence" value="ECO:0000318"/>
    <property type="project" value="GO_Central"/>
</dbReference>
<dbReference type="GO" id="GO:0006694">
    <property type="term" value="P:steroid biosynthetic process"/>
    <property type="evidence" value="ECO:0007669"/>
    <property type="project" value="UniProtKB-UniPathway"/>
</dbReference>
<dbReference type="CDD" id="cd20673">
    <property type="entry name" value="CYP17A1"/>
    <property type="match status" value="1"/>
</dbReference>
<dbReference type="FunFam" id="1.10.630.10:FF:000002">
    <property type="entry name" value="Cytochrome P450 1A1"/>
    <property type="match status" value="1"/>
</dbReference>
<dbReference type="Gene3D" id="1.10.630.10">
    <property type="entry name" value="Cytochrome P450"/>
    <property type="match status" value="1"/>
</dbReference>
<dbReference type="InterPro" id="IPR001128">
    <property type="entry name" value="Cyt_P450"/>
</dbReference>
<dbReference type="InterPro" id="IPR017972">
    <property type="entry name" value="Cyt_P450_CS"/>
</dbReference>
<dbReference type="InterPro" id="IPR002401">
    <property type="entry name" value="Cyt_P450_E_grp-I"/>
</dbReference>
<dbReference type="InterPro" id="IPR036396">
    <property type="entry name" value="Cyt_P450_sf"/>
</dbReference>
<dbReference type="PANTHER" id="PTHR24289:SF14">
    <property type="entry name" value="CYTOCHROME P450, FAMILY 17, SUBFAMILY A, POLYPEPTIDE 1"/>
    <property type="match status" value="1"/>
</dbReference>
<dbReference type="PANTHER" id="PTHR24289">
    <property type="entry name" value="STEROID 17-ALPHA-HYDROXYLASE/17,20 LYASE"/>
    <property type="match status" value="1"/>
</dbReference>
<dbReference type="Pfam" id="PF00067">
    <property type="entry name" value="p450"/>
    <property type="match status" value="1"/>
</dbReference>
<dbReference type="PRINTS" id="PR00463">
    <property type="entry name" value="EP450I"/>
</dbReference>
<dbReference type="PRINTS" id="PR00385">
    <property type="entry name" value="P450"/>
</dbReference>
<dbReference type="SUPFAM" id="SSF48264">
    <property type="entry name" value="Cytochrome P450"/>
    <property type="match status" value="1"/>
</dbReference>
<dbReference type="PROSITE" id="PS00086">
    <property type="entry name" value="CYTOCHROME_P450"/>
    <property type="match status" value="1"/>
</dbReference>
<proteinExistence type="evidence at transcript level"/>
<name>CP17A_ORYLA</name>
<accession>P70085</accession>
<accession>P70086</accession>
<feature type="chain" id="PRO_0000051946" description="Steroid 17-alpha-hydroxylase/17,20 lyase">
    <location>
        <begin position="1"/>
        <end position="517"/>
    </location>
</feature>
<feature type="binding site" description="axial binding residue" evidence="1">
    <location>
        <position position="451"/>
    </location>
    <ligand>
        <name>heme</name>
        <dbReference type="ChEBI" id="CHEBI:30413"/>
    </ligand>
    <ligandPart>
        <name>Fe</name>
        <dbReference type="ChEBI" id="CHEBI:18248"/>
    </ligandPart>
</feature>
<feature type="splice variant" id="VSP_000615" description="In isoform C17S." evidence="3">
    <location>
        <begin position="230"/>
        <end position="258"/>
    </location>
</feature>
<organism>
    <name type="scientific">Oryzias latipes</name>
    <name type="common">Japanese rice fish</name>
    <name type="synonym">Japanese killifish</name>
    <dbReference type="NCBI Taxonomy" id="8090"/>
    <lineage>
        <taxon>Eukaryota</taxon>
        <taxon>Metazoa</taxon>
        <taxon>Chordata</taxon>
        <taxon>Craniata</taxon>
        <taxon>Vertebrata</taxon>
        <taxon>Euteleostomi</taxon>
        <taxon>Actinopterygii</taxon>
        <taxon>Neopterygii</taxon>
        <taxon>Teleostei</taxon>
        <taxon>Neoteleostei</taxon>
        <taxon>Acanthomorphata</taxon>
        <taxon>Ovalentaria</taxon>
        <taxon>Atherinomorphae</taxon>
        <taxon>Beloniformes</taxon>
        <taxon>Adrianichthyidae</taxon>
        <taxon>Oryziinae</taxon>
        <taxon>Oryzias</taxon>
    </lineage>
</organism>
<comment type="function">
    <text>Conversion of pregnenolone and progesterone to their 17-alpha-hydroxylated products and subsequently to dehydroepiandrosterone (DHEA) and androstenedione. Catalyzes both the 17-alpha-hydroxylation and the 17,20-lyase reaction.</text>
</comment>
<comment type="catalytic activity">
    <reaction evidence="2">
        <text>a C21-steroid + reduced [NADPH--hemoprotein reductase] + O2 = a 17alpha-hydroxy-C21-steroid + oxidized [NADPH--hemoprotein reductase] + H2O + H(+)</text>
        <dbReference type="Rhea" id="RHEA:65760"/>
        <dbReference type="Rhea" id="RHEA-COMP:11964"/>
        <dbReference type="Rhea" id="RHEA-COMP:11965"/>
        <dbReference type="ChEBI" id="CHEBI:15377"/>
        <dbReference type="ChEBI" id="CHEBI:15378"/>
        <dbReference type="ChEBI" id="CHEBI:15379"/>
        <dbReference type="ChEBI" id="CHEBI:57618"/>
        <dbReference type="ChEBI" id="CHEBI:58210"/>
        <dbReference type="ChEBI" id="CHEBI:61313"/>
        <dbReference type="ChEBI" id="CHEBI:138141"/>
        <dbReference type="EC" id="1.14.14.19"/>
    </reaction>
</comment>
<comment type="catalytic activity">
    <reaction evidence="2">
        <text>17alpha-hydroxyprogesterone + reduced [NADPH--hemoprotein reductase] + O2 = androst-4-ene-3,17-dione + acetate + oxidized [NADPH--hemoprotein reductase] + H2O + 2 H(+)</text>
        <dbReference type="Rhea" id="RHEA:14753"/>
        <dbReference type="Rhea" id="RHEA-COMP:11964"/>
        <dbReference type="Rhea" id="RHEA-COMP:11965"/>
        <dbReference type="ChEBI" id="CHEBI:15377"/>
        <dbReference type="ChEBI" id="CHEBI:15378"/>
        <dbReference type="ChEBI" id="CHEBI:15379"/>
        <dbReference type="ChEBI" id="CHEBI:16422"/>
        <dbReference type="ChEBI" id="CHEBI:17252"/>
        <dbReference type="ChEBI" id="CHEBI:30089"/>
        <dbReference type="ChEBI" id="CHEBI:57618"/>
        <dbReference type="ChEBI" id="CHEBI:58210"/>
        <dbReference type="EC" id="1.14.14.32"/>
    </reaction>
</comment>
<comment type="catalytic activity">
    <reaction evidence="2">
        <text>17alpha-hydroxypregnenolone + reduced [NADPH--hemoprotein reductase] + O2 = 3beta-hydroxyandrost-5-en-17-one + acetate + oxidized [NADPH--hemoprotein reductase] + H2O + 2 H(+)</text>
        <dbReference type="Rhea" id="RHEA:50244"/>
        <dbReference type="Rhea" id="RHEA-COMP:11964"/>
        <dbReference type="Rhea" id="RHEA-COMP:11965"/>
        <dbReference type="ChEBI" id="CHEBI:15377"/>
        <dbReference type="ChEBI" id="CHEBI:15378"/>
        <dbReference type="ChEBI" id="CHEBI:15379"/>
        <dbReference type="ChEBI" id="CHEBI:28689"/>
        <dbReference type="ChEBI" id="CHEBI:28750"/>
        <dbReference type="ChEBI" id="CHEBI:30089"/>
        <dbReference type="ChEBI" id="CHEBI:57618"/>
        <dbReference type="ChEBI" id="CHEBI:58210"/>
        <dbReference type="EC" id="1.14.14.32"/>
    </reaction>
</comment>
<comment type="cofactor">
    <cofactor evidence="1">
        <name>heme</name>
        <dbReference type="ChEBI" id="CHEBI:30413"/>
    </cofactor>
</comment>
<comment type="pathway">
    <text>Lipid metabolism; steroid biosynthesis.</text>
</comment>
<comment type="subcellular location">
    <subcellularLocation>
        <location evidence="4">Membrane</location>
    </subcellularLocation>
</comment>
<comment type="alternative products">
    <event type="alternative splicing"/>
    <isoform>
        <id>P70085-1</id>
        <name>C17L</name>
        <sequence type="displayed"/>
    </isoform>
    <isoform>
        <id>P70085-2</id>
        <name>C17S</name>
        <sequence type="described" ref="VSP_000615"/>
    </isoform>
</comment>
<comment type="similarity">
    <text evidence="4">Belongs to the cytochrome P450 family.</text>
</comment>
<gene>
    <name type="primary">cyp17a1</name>
    <name type="synonym">cyp17</name>
</gene>
<evidence type="ECO:0000250" key="1"/>
<evidence type="ECO:0000250" key="2">
    <source>
        <dbReference type="UniProtKB" id="P05093"/>
    </source>
</evidence>
<evidence type="ECO:0000303" key="3">
    <source>
    </source>
</evidence>
<evidence type="ECO:0000305" key="4"/>
<protein>
    <recommendedName>
        <fullName>Steroid 17-alpha-hydroxylase/17,20 lyase</fullName>
        <ecNumber evidence="2">1.14.14.19</ecNumber>
        <ecNumber evidence="2">1.14.14.32</ecNumber>
    </recommendedName>
    <alternativeName>
        <fullName>17-alpha-hydroxyprogesterone aldolase</fullName>
    </alternativeName>
    <alternativeName>
        <fullName>CYPXVII</fullName>
    </alternativeName>
    <alternativeName>
        <fullName>Cytochrome P450 17A1</fullName>
    </alternativeName>
    <alternativeName>
        <fullName>Cytochrome P450-C17</fullName>
        <shortName>Cytochrome P450c17</shortName>
    </alternativeName>
</protein>